<accession>O34449</accession>
<organism>
    <name type="scientific">Bacillus subtilis (strain 168)</name>
    <dbReference type="NCBI Taxonomy" id="224308"/>
    <lineage>
        <taxon>Bacteria</taxon>
        <taxon>Bacillati</taxon>
        <taxon>Bacillota</taxon>
        <taxon>Bacilli</taxon>
        <taxon>Bacillales</taxon>
        <taxon>Bacillaceae</taxon>
        <taxon>Bacillus</taxon>
    </lineage>
</organism>
<protein>
    <recommendedName>
        <fullName>SPbeta prophage-derived putative antirepressor protein YoqD</fullName>
    </recommendedName>
</protein>
<feature type="chain" id="PRO_0000390396" description="SPbeta prophage-derived putative antirepressor protein YoqD">
    <location>
        <begin position="1"/>
        <end position="251"/>
    </location>
</feature>
<reference key="1">
    <citation type="journal article" date="1997" name="Nature">
        <title>The complete genome sequence of the Gram-positive bacterium Bacillus subtilis.</title>
        <authorList>
            <person name="Kunst F."/>
            <person name="Ogasawara N."/>
            <person name="Moszer I."/>
            <person name="Albertini A.M."/>
            <person name="Alloni G."/>
            <person name="Azevedo V."/>
            <person name="Bertero M.G."/>
            <person name="Bessieres P."/>
            <person name="Bolotin A."/>
            <person name="Borchert S."/>
            <person name="Borriss R."/>
            <person name="Boursier L."/>
            <person name="Brans A."/>
            <person name="Braun M."/>
            <person name="Brignell S.C."/>
            <person name="Bron S."/>
            <person name="Brouillet S."/>
            <person name="Bruschi C.V."/>
            <person name="Caldwell B."/>
            <person name="Capuano V."/>
            <person name="Carter N.M."/>
            <person name="Choi S.-K."/>
            <person name="Codani J.-J."/>
            <person name="Connerton I.F."/>
            <person name="Cummings N.J."/>
            <person name="Daniel R.A."/>
            <person name="Denizot F."/>
            <person name="Devine K.M."/>
            <person name="Duesterhoeft A."/>
            <person name="Ehrlich S.D."/>
            <person name="Emmerson P.T."/>
            <person name="Entian K.-D."/>
            <person name="Errington J."/>
            <person name="Fabret C."/>
            <person name="Ferrari E."/>
            <person name="Foulger D."/>
            <person name="Fritz C."/>
            <person name="Fujita M."/>
            <person name="Fujita Y."/>
            <person name="Fuma S."/>
            <person name="Galizzi A."/>
            <person name="Galleron N."/>
            <person name="Ghim S.-Y."/>
            <person name="Glaser P."/>
            <person name="Goffeau A."/>
            <person name="Golightly E.J."/>
            <person name="Grandi G."/>
            <person name="Guiseppi G."/>
            <person name="Guy B.J."/>
            <person name="Haga K."/>
            <person name="Haiech J."/>
            <person name="Harwood C.R."/>
            <person name="Henaut A."/>
            <person name="Hilbert H."/>
            <person name="Holsappel S."/>
            <person name="Hosono S."/>
            <person name="Hullo M.-F."/>
            <person name="Itaya M."/>
            <person name="Jones L.-M."/>
            <person name="Joris B."/>
            <person name="Karamata D."/>
            <person name="Kasahara Y."/>
            <person name="Klaerr-Blanchard M."/>
            <person name="Klein C."/>
            <person name="Kobayashi Y."/>
            <person name="Koetter P."/>
            <person name="Koningstein G."/>
            <person name="Krogh S."/>
            <person name="Kumano M."/>
            <person name="Kurita K."/>
            <person name="Lapidus A."/>
            <person name="Lardinois S."/>
            <person name="Lauber J."/>
            <person name="Lazarevic V."/>
            <person name="Lee S.-M."/>
            <person name="Levine A."/>
            <person name="Liu H."/>
            <person name="Masuda S."/>
            <person name="Mauel C."/>
            <person name="Medigue C."/>
            <person name="Medina N."/>
            <person name="Mellado R.P."/>
            <person name="Mizuno M."/>
            <person name="Moestl D."/>
            <person name="Nakai S."/>
            <person name="Noback M."/>
            <person name="Noone D."/>
            <person name="O'Reilly M."/>
            <person name="Ogawa K."/>
            <person name="Ogiwara A."/>
            <person name="Oudega B."/>
            <person name="Park S.-H."/>
            <person name="Parro V."/>
            <person name="Pohl T.M."/>
            <person name="Portetelle D."/>
            <person name="Porwollik S."/>
            <person name="Prescott A.M."/>
            <person name="Presecan E."/>
            <person name="Pujic P."/>
            <person name="Purnelle B."/>
            <person name="Rapoport G."/>
            <person name="Rey M."/>
            <person name="Reynolds S."/>
            <person name="Rieger M."/>
            <person name="Rivolta C."/>
            <person name="Rocha E."/>
            <person name="Roche B."/>
            <person name="Rose M."/>
            <person name="Sadaie Y."/>
            <person name="Sato T."/>
            <person name="Scanlan E."/>
            <person name="Schleich S."/>
            <person name="Schroeter R."/>
            <person name="Scoffone F."/>
            <person name="Sekiguchi J."/>
            <person name="Sekowska A."/>
            <person name="Seror S.J."/>
            <person name="Serror P."/>
            <person name="Shin B.-S."/>
            <person name="Soldo B."/>
            <person name="Sorokin A."/>
            <person name="Tacconi E."/>
            <person name="Takagi T."/>
            <person name="Takahashi H."/>
            <person name="Takemaru K."/>
            <person name="Takeuchi M."/>
            <person name="Tamakoshi A."/>
            <person name="Tanaka T."/>
            <person name="Terpstra P."/>
            <person name="Tognoni A."/>
            <person name="Tosato V."/>
            <person name="Uchiyama S."/>
            <person name="Vandenbol M."/>
            <person name="Vannier F."/>
            <person name="Vassarotti A."/>
            <person name="Viari A."/>
            <person name="Wambutt R."/>
            <person name="Wedler E."/>
            <person name="Wedler H."/>
            <person name="Weitzenegger T."/>
            <person name="Winters P."/>
            <person name="Wipat A."/>
            <person name="Yamamoto H."/>
            <person name="Yamane K."/>
            <person name="Yasumoto K."/>
            <person name="Yata K."/>
            <person name="Yoshida K."/>
            <person name="Yoshikawa H.-F."/>
            <person name="Zumstein E."/>
            <person name="Yoshikawa H."/>
            <person name="Danchin A."/>
        </authorList>
    </citation>
    <scope>NUCLEOTIDE SEQUENCE [LARGE SCALE GENOMIC DNA]</scope>
    <source>
        <strain>168</strain>
    </source>
</reference>
<name>YOQD_BACSU</name>
<proteinExistence type="predicted"/>
<gene>
    <name type="primary">yoqD</name>
    <name type="ordered locus">BSU20670</name>
</gene>
<keyword id="KW-0238">DNA-binding</keyword>
<keyword id="KW-1185">Reference proteome</keyword>
<sequence length="251" mass="28593">MESYLTVIEQNGQLLVDSREVAEMVGKRHTDLLRSIDGYVAILLNAKLRSVEFFLESTYKDATGRSLKHFHLTRKGCDMVANKMTGAKGVLFTAQYVSKFEEMEKALKARPSLIDTYLDMNEDERAIAYFTERKAKRELQEQLTLAEPKVEKYDRFLNTDGLMKIGQVAKAIGIKGMGQNNLFRFLRENKVLIDGTNKNAPYQKYVERGFFQVKTQETSVGIKTITLVTPKGADFIVDLLKKHGHKREIAS</sequence>
<dbReference type="EMBL" id="AL009126">
    <property type="protein sequence ID" value="CAB13959.1"/>
    <property type="molecule type" value="Genomic_DNA"/>
</dbReference>
<dbReference type="RefSeq" id="NP_389949.1">
    <property type="nucleotide sequence ID" value="NC_000964.3"/>
</dbReference>
<dbReference type="RefSeq" id="WP_004399389.1">
    <property type="nucleotide sequence ID" value="NZ_OZ025638.1"/>
</dbReference>
<dbReference type="FunCoup" id="O34449">
    <property type="interactions" value="59"/>
</dbReference>
<dbReference type="STRING" id="224308.BSU20670"/>
<dbReference type="PaxDb" id="224308-BSU20670"/>
<dbReference type="EnsemblBacteria" id="CAB13959">
    <property type="protein sequence ID" value="CAB13959"/>
    <property type="gene ID" value="BSU_20670"/>
</dbReference>
<dbReference type="GeneID" id="939436"/>
<dbReference type="KEGG" id="bsu:BSU20670"/>
<dbReference type="PATRIC" id="fig|224308.179.peg.2257"/>
<dbReference type="eggNOG" id="COG3645">
    <property type="taxonomic scope" value="Bacteria"/>
</dbReference>
<dbReference type="eggNOG" id="COG3646">
    <property type="taxonomic scope" value="Bacteria"/>
</dbReference>
<dbReference type="InParanoid" id="O34449"/>
<dbReference type="OrthoDB" id="9812611at2"/>
<dbReference type="PhylomeDB" id="O34449"/>
<dbReference type="BioCyc" id="BSUB:BSU20670-MONOMER"/>
<dbReference type="Proteomes" id="UP000001570">
    <property type="component" value="Chromosome"/>
</dbReference>
<dbReference type="GO" id="GO:0003677">
    <property type="term" value="F:DNA binding"/>
    <property type="evidence" value="ECO:0007669"/>
    <property type="project" value="UniProtKB-KW"/>
</dbReference>
<dbReference type="InterPro" id="IPR005039">
    <property type="entry name" value="Ant_C"/>
</dbReference>
<dbReference type="InterPro" id="IPR014054">
    <property type="entry name" value="Phage_regulatory_Rha"/>
</dbReference>
<dbReference type="NCBIfam" id="TIGR02681">
    <property type="entry name" value="phage_pRha"/>
    <property type="match status" value="1"/>
</dbReference>
<dbReference type="Pfam" id="PF03374">
    <property type="entry name" value="ANT"/>
    <property type="match status" value="1"/>
</dbReference>
<dbReference type="Pfam" id="PF09669">
    <property type="entry name" value="Phage_pRha"/>
    <property type="match status" value="1"/>
</dbReference>